<comment type="function">
    <text evidence="2">Cell wall formation.</text>
</comment>
<comment type="catalytic activity">
    <reaction evidence="2">
        <text>2 D-alanine + ATP = D-alanyl-D-alanine + ADP + phosphate + H(+)</text>
        <dbReference type="Rhea" id="RHEA:11224"/>
        <dbReference type="ChEBI" id="CHEBI:15378"/>
        <dbReference type="ChEBI" id="CHEBI:30616"/>
        <dbReference type="ChEBI" id="CHEBI:43474"/>
        <dbReference type="ChEBI" id="CHEBI:57416"/>
        <dbReference type="ChEBI" id="CHEBI:57822"/>
        <dbReference type="ChEBI" id="CHEBI:456216"/>
        <dbReference type="EC" id="6.3.2.4"/>
    </reaction>
</comment>
<comment type="cofactor">
    <cofactor evidence="1">
        <name>Mg(2+)</name>
        <dbReference type="ChEBI" id="CHEBI:18420"/>
    </cofactor>
    <cofactor evidence="1">
        <name>Mn(2+)</name>
        <dbReference type="ChEBI" id="CHEBI:29035"/>
    </cofactor>
    <text evidence="1">Binds 2 magnesium or manganese ions per subunit.</text>
</comment>
<comment type="pathway">
    <text evidence="2">Cell wall biogenesis; peptidoglycan biosynthesis.</text>
</comment>
<comment type="subcellular location">
    <subcellularLocation>
        <location evidence="2">Cytoplasm</location>
    </subcellularLocation>
</comment>
<comment type="similarity">
    <text evidence="2">Belongs to the D-alanine--D-alanine ligase family.</text>
</comment>
<accession>B9DMH1</accession>
<proteinExistence type="inferred from homology"/>
<gene>
    <name evidence="2" type="primary">ddl</name>
    <name type="ordered locus">Sca_1583</name>
</gene>
<protein>
    <recommendedName>
        <fullName evidence="2">D-alanine--D-alanine ligase</fullName>
        <ecNumber evidence="2">6.3.2.4</ecNumber>
    </recommendedName>
    <alternativeName>
        <fullName evidence="2">D-Ala-D-Ala ligase</fullName>
    </alternativeName>
    <alternativeName>
        <fullName evidence="2">D-alanylalanine synthetase</fullName>
    </alternativeName>
</protein>
<dbReference type="EC" id="6.3.2.4" evidence="2"/>
<dbReference type="EMBL" id="AM295250">
    <property type="protein sequence ID" value="CAL28488.1"/>
    <property type="molecule type" value="Genomic_DNA"/>
</dbReference>
<dbReference type="RefSeq" id="WP_015900828.1">
    <property type="nucleotide sequence ID" value="NC_012121.1"/>
</dbReference>
<dbReference type="SMR" id="B9DMH1"/>
<dbReference type="GeneID" id="93794037"/>
<dbReference type="KEGG" id="sca:SCA_1583"/>
<dbReference type="eggNOG" id="COG1181">
    <property type="taxonomic scope" value="Bacteria"/>
</dbReference>
<dbReference type="HOGENOM" id="CLU_039268_0_0_9"/>
<dbReference type="OrthoDB" id="9813261at2"/>
<dbReference type="BioCyc" id="SCAR396513:SCA_RS08040-MONOMER"/>
<dbReference type="UniPathway" id="UPA00219"/>
<dbReference type="Proteomes" id="UP000000444">
    <property type="component" value="Chromosome"/>
</dbReference>
<dbReference type="GO" id="GO:0005829">
    <property type="term" value="C:cytosol"/>
    <property type="evidence" value="ECO:0007669"/>
    <property type="project" value="TreeGrafter"/>
</dbReference>
<dbReference type="GO" id="GO:0005524">
    <property type="term" value="F:ATP binding"/>
    <property type="evidence" value="ECO:0007669"/>
    <property type="project" value="UniProtKB-KW"/>
</dbReference>
<dbReference type="GO" id="GO:0008716">
    <property type="term" value="F:D-alanine-D-alanine ligase activity"/>
    <property type="evidence" value="ECO:0007669"/>
    <property type="project" value="UniProtKB-UniRule"/>
</dbReference>
<dbReference type="GO" id="GO:0046872">
    <property type="term" value="F:metal ion binding"/>
    <property type="evidence" value="ECO:0007669"/>
    <property type="project" value="UniProtKB-KW"/>
</dbReference>
<dbReference type="GO" id="GO:0071555">
    <property type="term" value="P:cell wall organization"/>
    <property type="evidence" value="ECO:0007669"/>
    <property type="project" value="UniProtKB-KW"/>
</dbReference>
<dbReference type="GO" id="GO:0009252">
    <property type="term" value="P:peptidoglycan biosynthetic process"/>
    <property type="evidence" value="ECO:0007669"/>
    <property type="project" value="UniProtKB-UniRule"/>
</dbReference>
<dbReference type="GO" id="GO:0008360">
    <property type="term" value="P:regulation of cell shape"/>
    <property type="evidence" value="ECO:0007669"/>
    <property type="project" value="UniProtKB-KW"/>
</dbReference>
<dbReference type="FunFam" id="3.30.1490.20:FF:000007">
    <property type="entry name" value="D-alanine--D-alanine ligase"/>
    <property type="match status" value="1"/>
</dbReference>
<dbReference type="FunFam" id="3.30.470.20:FF:000008">
    <property type="entry name" value="D-alanine--D-alanine ligase"/>
    <property type="match status" value="1"/>
</dbReference>
<dbReference type="Gene3D" id="3.40.50.20">
    <property type="match status" value="1"/>
</dbReference>
<dbReference type="Gene3D" id="3.30.1490.20">
    <property type="entry name" value="ATP-grasp fold, A domain"/>
    <property type="match status" value="1"/>
</dbReference>
<dbReference type="Gene3D" id="3.30.470.20">
    <property type="entry name" value="ATP-grasp fold, B domain"/>
    <property type="match status" value="1"/>
</dbReference>
<dbReference type="HAMAP" id="MF_00047">
    <property type="entry name" value="Dala_Dala_lig"/>
    <property type="match status" value="1"/>
</dbReference>
<dbReference type="InterPro" id="IPR011761">
    <property type="entry name" value="ATP-grasp"/>
</dbReference>
<dbReference type="InterPro" id="IPR013815">
    <property type="entry name" value="ATP_grasp_subdomain_1"/>
</dbReference>
<dbReference type="InterPro" id="IPR000291">
    <property type="entry name" value="D-Ala_lig_Van_CS"/>
</dbReference>
<dbReference type="InterPro" id="IPR005905">
    <property type="entry name" value="D_ala_D_ala"/>
</dbReference>
<dbReference type="InterPro" id="IPR011095">
    <property type="entry name" value="Dala_Dala_lig_C"/>
</dbReference>
<dbReference type="InterPro" id="IPR011127">
    <property type="entry name" value="Dala_Dala_lig_N"/>
</dbReference>
<dbReference type="InterPro" id="IPR016185">
    <property type="entry name" value="PreATP-grasp_dom_sf"/>
</dbReference>
<dbReference type="NCBIfam" id="TIGR01205">
    <property type="entry name" value="D_ala_D_alaTIGR"/>
    <property type="match status" value="1"/>
</dbReference>
<dbReference type="NCBIfam" id="NF002526">
    <property type="entry name" value="PRK01966.1-2"/>
    <property type="match status" value="1"/>
</dbReference>
<dbReference type="NCBIfam" id="NF002528">
    <property type="entry name" value="PRK01966.1-4"/>
    <property type="match status" value="1"/>
</dbReference>
<dbReference type="PANTHER" id="PTHR23132">
    <property type="entry name" value="D-ALANINE--D-ALANINE LIGASE"/>
    <property type="match status" value="1"/>
</dbReference>
<dbReference type="PANTHER" id="PTHR23132:SF25">
    <property type="entry name" value="D-ALANINE--D-ALANINE LIGASE A"/>
    <property type="match status" value="1"/>
</dbReference>
<dbReference type="Pfam" id="PF07478">
    <property type="entry name" value="Dala_Dala_lig_C"/>
    <property type="match status" value="1"/>
</dbReference>
<dbReference type="Pfam" id="PF01820">
    <property type="entry name" value="Dala_Dala_lig_N"/>
    <property type="match status" value="1"/>
</dbReference>
<dbReference type="PIRSF" id="PIRSF039102">
    <property type="entry name" value="Ddl/VanB"/>
    <property type="match status" value="1"/>
</dbReference>
<dbReference type="SUPFAM" id="SSF56059">
    <property type="entry name" value="Glutathione synthetase ATP-binding domain-like"/>
    <property type="match status" value="1"/>
</dbReference>
<dbReference type="SUPFAM" id="SSF52440">
    <property type="entry name" value="PreATP-grasp domain"/>
    <property type="match status" value="1"/>
</dbReference>
<dbReference type="PROSITE" id="PS50975">
    <property type="entry name" value="ATP_GRASP"/>
    <property type="match status" value="1"/>
</dbReference>
<dbReference type="PROSITE" id="PS00843">
    <property type="entry name" value="DALA_DALA_LIGASE_1"/>
    <property type="match status" value="1"/>
</dbReference>
<name>DDL_STACT</name>
<evidence type="ECO:0000250" key="1"/>
<evidence type="ECO:0000255" key="2">
    <source>
        <dbReference type="HAMAP-Rule" id="MF_00047"/>
    </source>
</evidence>
<reference key="1">
    <citation type="journal article" date="2009" name="Appl. Environ. Microbiol.">
        <title>Genome analysis of the meat starter culture bacterium Staphylococcus carnosus TM300.</title>
        <authorList>
            <person name="Rosenstein R."/>
            <person name="Nerz C."/>
            <person name="Biswas L."/>
            <person name="Resch A."/>
            <person name="Raddatz G."/>
            <person name="Schuster S.C."/>
            <person name="Goetz F."/>
        </authorList>
    </citation>
    <scope>NUCLEOTIDE SEQUENCE [LARGE SCALE GENOMIC DNA]</scope>
    <source>
        <strain>TM300</strain>
    </source>
</reference>
<organism>
    <name type="scientific">Staphylococcus carnosus (strain TM300)</name>
    <dbReference type="NCBI Taxonomy" id="396513"/>
    <lineage>
        <taxon>Bacteria</taxon>
        <taxon>Bacillati</taxon>
        <taxon>Bacillota</taxon>
        <taxon>Bacilli</taxon>
        <taxon>Bacillales</taxon>
        <taxon>Staphylococcaceae</taxon>
        <taxon>Staphylococcus</taxon>
    </lineage>
</organism>
<keyword id="KW-0067">ATP-binding</keyword>
<keyword id="KW-0133">Cell shape</keyword>
<keyword id="KW-0961">Cell wall biogenesis/degradation</keyword>
<keyword id="KW-0963">Cytoplasm</keyword>
<keyword id="KW-0436">Ligase</keyword>
<keyword id="KW-0460">Magnesium</keyword>
<keyword id="KW-0464">Manganese</keyword>
<keyword id="KW-0479">Metal-binding</keyword>
<keyword id="KW-0547">Nucleotide-binding</keyword>
<keyword id="KW-0573">Peptidoglycan synthesis</keyword>
<keyword id="KW-1185">Reference proteome</keyword>
<feature type="chain" id="PRO_1000189745" description="D-alanine--D-alanine ligase">
    <location>
        <begin position="1"/>
        <end position="356"/>
    </location>
</feature>
<feature type="domain" description="ATP-grasp" evidence="2">
    <location>
        <begin position="134"/>
        <end position="339"/>
    </location>
</feature>
<feature type="binding site" evidence="2">
    <location>
        <begin position="167"/>
        <end position="222"/>
    </location>
    <ligand>
        <name>ATP</name>
        <dbReference type="ChEBI" id="CHEBI:30616"/>
    </ligand>
</feature>
<feature type="binding site" evidence="2">
    <location>
        <position position="293"/>
    </location>
    <ligand>
        <name>Mg(2+)</name>
        <dbReference type="ChEBI" id="CHEBI:18420"/>
        <label>1</label>
    </ligand>
</feature>
<feature type="binding site" evidence="2">
    <location>
        <position position="306"/>
    </location>
    <ligand>
        <name>Mg(2+)</name>
        <dbReference type="ChEBI" id="CHEBI:18420"/>
        <label>1</label>
    </ligand>
</feature>
<feature type="binding site" evidence="2">
    <location>
        <position position="306"/>
    </location>
    <ligand>
        <name>Mg(2+)</name>
        <dbReference type="ChEBI" id="CHEBI:18420"/>
        <label>2</label>
    </ligand>
</feature>
<feature type="binding site" evidence="2">
    <location>
        <position position="308"/>
    </location>
    <ligand>
        <name>Mg(2+)</name>
        <dbReference type="ChEBI" id="CHEBI:18420"/>
        <label>2</label>
    </ligand>
</feature>
<sequence>MAKENICIIYGGKSAEHDVSILTAQNVLNAINKDDYQVDIIYITNDGAWKKKDDITENVEDVDSLRLEEVEEGEISNLLTNSSSGQPYAAVFPLLHGPNGEDGTIQGLFEVLDLPYVGNGVLAASSTMDKLVMKQLFAHRGLPQLPYVSFLRSEYEKYQSNILKLVKDKLEFPVFVKPANLGSSVGISKCNNEEELKSGIEEAFQFDRKLVIEQGIEAREIEVAVLGNDYPETTQPGEVVKDVAFYDYKSKYLDGKVQLSIPAELDSEVQTTLRNMAAEAFKATDCSGLLRADFFVTEDNQIFINETNAMPGFTQYSMYPSLWENMGLSYADLITKLIELAKEKHVEKQKNKYKID</sequence>